<feature type="chain" id="PRO_1000020891" description="Protease HtpX homolog">
    <location>
        <begin position="1"/>
        <end position="291"/>
    </location>
</feature>
<feature type="transmembrane region" description="Helical" evidence="1">
    <location>
        <begin position="10"/>
        <end position="30"/>
    </location>
</feature>
<feature type="transmembrane region" description="Helical" evidence="1">
    <location>
        <begin position="33"/>
        <end position="53"/>
    </location>
</feature>
<feature type="transmembrane region" description="Helical" evidence="1">
    <location>
        <begin position="151"/>
        <end position="171"/>
    </location>
</feature>
<feature type="transmembrane region" description="Helical" evidence="1">
    <location>
        <begin position="181"/>
        <end position="201"/>
    </location>
</feature>
<feature type="active site" evidence="1">
    <location>
        <position position="136"/>
    </location>
</feature>
<feature type="binding site" evidence="1">
    <location>
        <position position="135"/>
    </location>
    <ligand>
        <name>Zn(2+)</name>
        <dbReference type="ChEBI" id="CHEBI:29105"/>
        <note>catalytic</note>
    </ligand>
</feature>
<feature type="binding site" evidence="1">
    <location>
        <position position="139"/>
    </location>
    <ligand>
        <name>Zn(2+)</name>
        <dbReference type="ChEBI" id="CHEBI:29105"/>
        <note>catalytic</note>
    </ligand>
</feature>
<feature type="binding site" evidence="1">
    <location>
        <position position="206"/>
    </location>
    <ligand>
        <name>Zn(2+)</name>
        <dbReference type="ChEBI" id="CHEBI:29105"/>
        <note>catalytic</note>
    </ligand>
</feature>
<organism>
    <name type="scientific">Mycobacterium sp. (strain KMS)</name>
    <dbReference type="NCBI Taxonomy" id="189918"/>
    <lineage>
        <taxon>Bacteria</taxon>
        <taxon>Bacillati</taxon>
        <taxon>Actinomycetota</taxon>
        <taxon>Actinomycetes</taxon>
        <taxon>Mycobacteriales</taxon>
        <taxon>Mycobacteriaceae</taxon>
        <taxon>Mycobacterium</taxon>
    </lineage>
</organism>
<dbReference type="EC" id="3.4.24.-" evidence="1"/>
<dbReference type="EMBL" id="CP000518">
    <property type="protein sequence ID" value="ABL90002.1"/>
    <property type="molecule type" value="Genomic_DNA"/>
</dbReference>
<dbReference type="STRING" id="189918.Mkms_0786"/>
<dbReference type="KEGG" id="mkm:Mkms_0786"/>
<dbReference type="HOGENOM" id="CLU_042266_3_1_11"/>
<dbReference type="OrthoDB" id="15218at2"/>
<dbReference type="GO" id="GO:0005886">
    <property type="term" value="C:plasma membrane"/>
    <property type="evidence" value="ECO:0007669"/>
    <property type="project" value="UniProtKB-SubCell"/>
</dbReference>
<dbReference type="GO" id="GO:0004222">
    <property type="term" value="F:metalloendopeptidase activity"/>
    <property type="evidence" value="ECO:0007669"/>
    <property type="project" value="UniProtKB-UniRule"/>
</dbReference>
<dbReference type="GO" id="GO:0008270">
    <property type="term" value="F:zinc ion binding"/>
    <property type="evidence" value="ECO:0007669"/>
    <property type="project" value="UniProtKB-UniRule"/>
</dbReference>
<dbReference type="GO" id="GO:0006508">
    <property type="term" value="P:proteolysis"/>
    <property type="evidence" value="ECO:0007669"/>
    <property type="project" value="UniProtKB-KW"/>
</dbReference>
<dbReference type="CDD" id="cd07336">
    <property type="entry name" value="M48B_HtpX_like"/>
    <property type="match status" value="1"/>
</dbReference>
<dbReference type="Gene3D" id="3.30.2010.10">
    <property type="entry name" value="Metalloproteases ('zincins'), catalytic domain"/>
    <property type="match status" value="1"/>
</dbReference>
<dbReference type="HAMAP" id="MF_00188">
    <property type="entry name" value="Pept_M48_protease_HtpX"/>
    <property type="match status" value="1"/>
</dbReference>
<dbReference type="InterPro" id="IPR050083">
    <property type="entry name" value="HtpX_protease"/>
</dbReference>
<dbReference type="InterPro" id="IPR022919">
    <property type="entry name" value="Pept_M48_protease_HtpX"/>
</dbReference>
<dbReference type="InterPro" id="IPR001915">
    <property type="entry name" value="Peptidase_M48"/>
</dbReference>
<dbReference type="NCBIfam" id="NF002839">
    <property type="entry name" value="PRK03072.1"/>
    <property type="match status" value="1"/>
</dbReference>
<dbReference type="PANTHER" id="PTHR43221">
    <property type="entry name" value="PROTEASE HTPX"/>
    <property type="match status" value="1"/>
</dbReference>
<dbReference type="PANTHER" id="PTHR43221:SF1">
    <property type="entry name" value="PROTEASE HTPX"/>
    <property type="match status" value="1"/>
</dbReference>
<dbReference type="Pfam" id="PF01435">
    <property type="entry name" value="Peptidase_M48"/>
    <property type="match status" value="1"/>
</dbReference>
<dbReference type="PROSITE" id="PS00142">
    <property type="entry name" value="ZINC_PROTEASE"/>
    <property type="match status" value="1"/>
</dbReference>
<gene>
    <name evidence="1" type="primary">htpX</name>
    <name type="ordered locus">Mkms_0786</name>
</gene>
<name>HTPX_MYCSK</name>
<reference key="1">
    <citation type="submission" date="2006-12" db="EMBL/GenBank/DDBJ databases">
        <title>Complete sequence of chromosome of Mycobacterium sp. KMS.</title>
        <authorList>
            <consortium name="US DOE Joint Genome Institute"/>
            <person name="Copeland A."/>
            <person name="Lucas S."/>
            <person name="Lapidus A."/>
            <person name="Barry K."/>
            <person name="Detter J.C."/>
            <person name="Glavina del Rio T."/>
            <person name="Hammon N."/>
            <person name="Israni S."/>
            <person name="Dalin E."/>
            <person name="Tice H."/>
            <person name="Pitluck S."/>
            <person name="Kiss H."/>
            <person name="Brettin T."/>
            <person name="Bruce D."/>
            <person name="Han C."/>
            <person name="Tapia R."/>
            <person name="Gilna P."/>
            <person name="Schmutz J."/>
            <person name="Larimer F."/>
            <person name="Land M."/>
            <person name="Hauser L."/>
            <person name="Kyrpides N."/>
            <person name="Mikhailova N."/>
            <person name="Miller C.D."/>
            <person name="Richardson P."/>
        </authorList>
    </citation>
    <scope>NUCLEOTIDE SEQUENCE [LARGE SCALE GENOMIC DNA]</scope>
    <source>
        <strain>KMS</strain>
    </source>
</reference>
<evidence type="ECO:0000255" key="1">
    <source>
        <dbReference type="HAMAP-Rule" id="MF_00188"/>
    </source>
</evidence>
<sequence length="291" mass="31372">MTWNPHANRFKTFLLLVGMSALIVFVGSLFGRSIMALAVLFAVGMNVYVYFNSDKLALKAMHAQPVSELQAPVMYRIVRELSNAAHQPMPRLYISDTANPNAFATGRNPRNSAVCCTTGILQILNERELRAVLGHELSHVYNRDILISCVAGAMASVITALANIALFAGMFGGNREGTNPFALLLVSFLGPIAATVVRLAVSRSREYQADQSGAELTGDPLALASALRKISGGVEAAPLPPQPQLADQAHLMIASPFRSGEKIGKLFSTHPPMADRIRRLEEMAGRGPGLY</sequence>
<protein>
    <recommendedName>
        <fullName evidence="1">Protease HtpX homolog</fullName>
        <ecNumber evidence="1">3.4.24.-</ecNumber>
    </recommendedName>
</protein>
<comment type="cofactor">
    <cofactor evidence="1">
        <name>Zn(2+)</name>
        <dbReference type="ChEBI" id="CHEBI:29105"/>
    </cofactor>
    <text evidence="1">Binds 1 zinc ion per subunit.</text>
</comment>
<comment type="subcellular location">
    <subcellularLocation>
        <location evidence="1">Cell membrane</location>
        <topology evidence="1">Multi-pass membrane protein</topology>
    </subcellularLocation>
</comment>
<comment type="similarity">
    <text evidence="1">Belongs to the peptidase M48B family.</text>
</comment>
<accession>A1UAZ4</accession>
<keyword id="KW-1003">Cell membrane</keyword>
<keyword id="KW-0378">Hydrolase</keyword>
<keyword id="KW-0472">Membrane</keyword>
<keyword id="KW-0479">Metal-binding</keyword>
<keyword id="KW-0482">Metalloprotease</keyword>
<keyword id="KW-0645">Protease</keyword>
<keyword id="KW-0812">Transmembrane</keyword>
<keyword id="KW-1133">Transmembrane helix</keyword>
<keyword id="KW-0862">Zinc</keyword>
<proteinExistence type="inferred from homology"/>